<evidence type="ECO:0000250" key="1"/>
<evidence type="ECO:0000250" key="2">
    <source>
        <dbReference type="UniProtKB" id="P0C0S4"/>
    </source>
</evidence>
<evidence type="ECO:0000250" key="3">
    <source>
        <dbReference type="UniProtKB" id="P0C0S5"/>
    </source>
</evidence>
<evidence type="ECO:0000250" key="4">
    <source>
        <dbReference type="UniProtKB" id="P0C0S6"/>
    </source>
</evidence>
<evidence type="ECO:0000256" key="5">
    <source>
        <dbReference type="SAM" id="MobiDB-lite"/>
    </source>
</evidence>
<evidence type="ECO:0000305" key="6"/>
<dbReference type="EMBL" id="AY074805">
    <property type="protein sequence ID" value="AAL71863.1"/>
    <property type="molecule type" value="mRNA"/>
</dbReference>
<dbReference type="RefSeq" id="NP_001009270.1">
    <property type="nucleotide sequence ID" value="NM_001009270.1"/>
</dbReference>
<dbReference type="SMR" id="Q6YNC8"/>
<dbReference type="STRING" id="9940.ENSOARP00000014975"/>
<dbReference type="PaxDb" id="9940-ENSOARP00000014975"/>
<dbReference type="Ensembl" id="ENSOART00180002514">
    <property type="protein sequence ID" value="ENSOARP00180001089"/>
    <property type="gene ID" value="ENSOARG00180001641"/>
</dbReference>
<dbReference type="GeneID" id="443235"/>
<dbReference type="KEGG" id="oas:443235"/>
<dbReference type="CTD" id="3015"/>
<dbReference type="eggNOG" id="KOG1757">
    <property type="taxonomic scope" value="Eukaryota"/>
</dbReference>
<dbReference type="OrthoDB" id="9709081at2759"/>
<dbReference type="Proteomes" id="UP000002356">
    <property type="component" value="Unplaced"/>
</dbReference>
<dbReference type="GO" id="GO:0000791">
    <property type="term" value="C:euchromatin"/>
    <property type="evidence" value="ECO:0007669"/>
    <property type="project" value="Ensembl"/>
</dbReference>
<dbReference type="GO" id="GO:0000792">
    <property type="term" value="C:heterochromatin"/>
    <property type="evidence" value="ECO:0007669"/>
    <property type="project" value="Ensembl"/>
</dbReference>
<dbReference type="GO" id="GO:0000786">
    <property type="term" value="C:nucleosome"/>
    <property type="evidence" value="ECO:0007669"/>
    <property type="project" value="UniProtKB-KW"/>
</dbReference>
<dbReference type="GO" id="GO:0005634">
    <property type="term" value="C:nucleus"/>
    <property type="evidence" value="ECO:0007669"/>
    <property type="project" value="UniProtKB-SubCell"/>
</dbReference>
<dbReference type="GO" id="GO:0031492">
    <property type="term" value="F:nucleosomal DNA binding"/>
    <property type="evidence" value="ECO:0007669"/>
    <property type="project" value="Ensembl"/>
</dbReference>
<dbReference type="GO" id="GO:0046982">
    <property type="term" value="F:protein heterodimerization activity"/>
    <property type="evidence" value="ECO:0007669"/>
    <property type="project" value="InterPro"/>
</dbReference>
<dbReference type="GO" id="GO:0000978">
    <property type="term" value="F:RNA polymerase II cis-regulatory region sequence-specific DNA binding"/>
    <property type="evidence" value="ECO:0007669"/>
    <property type="project" value="Ensembl"/>
</dbReference>
<dbReference type="GO" id="GO:0000979">
    <property type="term" value="F:RNA polymerase II core promoter sequence-specific DNA binding"/>
    <property type="evidence" value="ECO:0007669"/>
    <property type="project" value="Ensembl"/>
</dbReference>
<dbReference type="GO" id="GO:0030527">
    <property type="term" value="F:structural constituent of chromatin"/>
    <property type="evidence" value="ECO:0007669"/>
    <property type="project" value="InterPro"/>
</dbReference>
<dbReference type="GO" id="GO:0071392">
    <property type="term" value="P:cellular response to estradiol stimulus"/>
    <property type="evidence" value="ECO:0007669"/>
    <property type="project" value="Ensembl"/>
</dbReference>
<dbReference type="GO" id="GO:0045944">
    <property type="term" value="P:positive regulation of transcription by RNA polymerase II"/>
    <property type="evidence" value="ECO:0007669"/>
    <property type="project" value="Ensembl"/>
</dbReference>
<dbReference type="CDD" id="cd00074">
    <property type="entry name" value="HFD_H2A"/>
    <property type="match status" value="1"/>
</dbReference>
<dbReference type="FunFam" id="1.10.20.10:FF:000005">
    <property type="entry name" value="Histone H2A"/>
    <property type="match status" value="1"/>
</dbReference>
<dbReference type="Gene3D" id="1.10.20.10">
    <property type="entry name" value="Histone, subunit A"/>
    <property type="match status" value="1"/>
</dbReference>
<dbReference type="InterPro" id="IPR009072">
    <property type="entry name" value="Histone-fold"/>
</dbReference>
<dbReference type="InterPro" id="IPR002119">
    <property type="entry name" value="Histone_H2A"/>
</dbReference>
<dbReference type="InterPro" id="IPR007125">
    <property type="entry name" value="Histone_H2A/H2B/H3"/>
</dbReference>
<dbReference type="InterPro" id="IPR032454">
    <property type="entry name" value="Histone_H2A_C"/>
</dbReference>
<dbReference type="InterPro" id="IPR032458">
    <property type="entry name" value="Histone_H2A_CS"/>
</dbReference>
<dbReference type="PANTHER" id="PTHR23430">
    <property type="entry name" value="HISTONE H2A"/>
    <property type="match status" value="1"/>
</dbReference>
<dbReference type="Pfam" id="PF00125">
    <property type="entry name" value="Histone"/>
    <property type="match status" value="1"/>
</dbReference>
<dbReference type="Pfam" id="PF16211">
    <property type="entry name" value="Histone_H2A_C"/>
    <property type="match status" value="1"/>
</dbReference>
<dbReference type="PRINTS" id="PR00620">
    <property type="entry name" value="HISTONEH2A"/>
</dbReference>
<dbReference type="SMART" id="SM00414">
    <property type="entry name" value="H2A"/>
    <property type="match status" value="1"/>
</dbReference>
<dbReference type="SUPFAM" id="SSF47113">
    <property type="entry name" value="Histone-fold"/>
    <property type="match status" value="1"/>
</dbReference>
<dbReference type="PROSITE" id="PS00046">
    <property type="entry name" value="HISTONE_H2A"/>
    <property type="match status" value="1"/>
</dbReference>
<reference key="1">
    <citation type="submission" date="2002-01" db="EMBL/GenBank/DDBJ databases">
        <title>Histone H2A.Z expression and regulation in ovine mammary gland.</title>
        <authorList>
            <person name="Le Provost F."/>
            <person name="Charlier M."/>
        </authorList>
    </citation>
    <scope>NUCLEOTIDE SEQUENCE [MRNA]</scope>
</reference>
<protein>
    <recommendedName>
        <fullName>Histone H2A.Z</fullName>
        <shortName>H2A/z</shortName>
    </recommendedName>
</protein>
<keyword id="KW-0007">Acetylation</keyword>
<keyword id="KW-0158">Chromosome</keyword>
<keyword id="KW-0238">DNA-binding</keyword>
<keyword id="KW-1017">Isopeptide bond</keyword>
<keyword id="KW-0488">Methylation</keyword>
<keyword id="KW-0544">Nucleosome core</keyword>
<keyword id="KW-0539">Nucleus</keyword>
<keyword id="KW-1185">Reference proteome</keyword>
<keyword id="KW-0832">Ubl conjugation</keyword>
<accession>Q6YNC8</accession>
<proteinExistence type="evidence at transcript level"/>
<organism>
    <name type="scientific">Ovis aries</name>
    <name type="common">Sheep</name>
    <dbReference type="NCBI Taxonomy" id="9940"/>
    <lineage>
        <taxon>Eukaryota</taxon>
        <taxon>Metazoa</taxon>
        <taxon>Chordata</taxon>
        <taxon>Craniata</taxon>
        <taxon>Vertebrata</taxon>
        <taxon>Euteleostomi</taxon>
        <taxon>Mammalia</taxon>
        <taxon>Eutheria</taxon>
        <taxon>Laurasiatheria</taxon>
        <taxon>Artiodactyla</taxon>
        <taxon>Ruminantia</taxon>
        <taxon>Pecora</taxon>
        <taxon>Bovidae</taxon>
        <taxon>Caprinae</taxon>
        <taxon>Ovis</taxon>
    </lineage>
</organism>
<name>H2AZ_SHEEP</name>
<sequence>MAGGKAGKDSGKAKTKAVSRSQRAGLQFPVGRIHRHLKSRTTSHGRVGATAAVYSAAILEYLTAEVLELAGNASKDLKVKRITPRHLQLAIRGDEELDSLIKATIAGGGVIPHIHKSLIGKKGQQKTV</sequence>
<comment type="function">
    <text evidence="3 4">Variant histone H2A which replaces conventional H2A in a subset of nucleosomes. Nucleosomes wrap and compact DNA into chromatin, limiting DNA accessibility to the cellular machineries which require DNA as a template. Histones thereby play a central role in transcription regulation, DNA repair, DNA replication and chromosomal stability. DNA accessibility is regulated via a complex set of post-translational modifications of histones, also called histone code, and nucleosome remodeling. May be involved in the formation of constitutive heterochromatin. May be required for chromosome segregation during cell division (By similarity).</text>
</comment>
<comment type="subunit">
    <text evidence="3 4">The nucleosome is a histone octamer containing two molecules each of H2A, H2B, H3 and H4 assembled in one H3-H4 heterotetramer and two H2A-H2B heterodimers. The octamer wraps approximately 147 bp of DNA. H2A or its variant H2AZ1 forms a heterodimer with H2B. H2AZ1 interacts with INCENP. Interacts (via M6 cassette) with ANP32E; leading to removal of H2A.Z/H2AZ1 from the nucleosome. Interacts with VPS72 (via N-terminal domain); the interaction is enhanced by VPS72 phosphorylation which is promoted by ZNHIT1. Interacts with PWWP2A. Interacts with FH (when phosphorylated by PRKDC). Interacts with ZNHIT1; the interaction results in recruitment of H2AZ1 to the MYOG promoter region which is required for muscle-specific gene expression (By similarity).</text>
</comment>
<comment type="subcellular location">
    <subcellularLocation>
        <location>Nucleus</location>
    </subcellularLocation>
    <subcellularLocation>
        <location>Chromosome</location>
    </subcellularLocation>
</comment>
<comment type="PTM">
    <text evidence="3">Monoubiquitination of Lys-122 gives a specific tag for epigenetic transcriptional repression.</text>
</comment>
<comment type="PTM">
    <text evidence="3 4">Acetylated on Lys-5, Lys-8, Lys-12 and Lys-14 by KAT2A; KAT2A is recruited by the XPC complex in absence of DNA damage (By similarity). Acetylated on Lys-5, Lys-8 and Lys-12 during interphase; acetylation disappears at mitosis (By similarity). Acetylation by the NuA4 histone acetyltransferase complex is required for hematopoietic stem cell maintenance (By similarity).</text>
</comment>
<comment type="PTM">
    <text evidence="2">Not phosphorylated.</text>
</comment>
<comment type="PTM">
    <text evidence="3">Monomethylated on Lys-5 and Lys-8 by SETD6. SETD6 predominantly methylates Lys-8, lys-5 being a possible secondary site.</text>
</comment>
<comment type="PTM">
    <text evidence="3">Lactylated in macrophages by EP300/P300 by using lactoyl-CoA directly derived from endogenous or exogenous lactate, leading to stimulates gene transcription.</text>
</comment>
<comment type="similarity">
    <text evidence="6">Belongs to the histone H2A family.</text>
</comment>
<gene>
    <name type="primary">H2AZ1</name>
</gene>
<feature type="initiator methionine" description="Removed" evidence="6">
    <location>
        <position position="1"/>
    </location>
</feature>
<feature type="chain" id="PRO_0000055301" description="Histone H2A.Z">
    <location>
        <begin position="2"/>
        <end position="128"/>
    </location>
</feature>
<feature type="region of interest" description="Disordered" evidence="5">
    <location>
        <begin position="1"/>
        <end position="25"/>
    </location>
</feature>
<feature type="region of interest" description="Required for interaction with INCENP" evidence="1">
    <location>
        <begin position="1"/>
        <end position="17"/>
    </location>
</feature>
<feature type="region of interest" description="M6 cassette" evidence="1">
    <location>
        <begin position="89"/>
        <end position="100"/>
    </location>
</feature>
<feature type="region of interest" description="Required for interaction with INCENP" evidence="1">
    <location>
        <begin position="93"/>
        <end position="103"/>
    </location>
</feature>
<feature type="region of interest" description="Required for interaction with PWWP2A" evidence="3">
    <location>
        <begin position="120"/>
        <end position="128"/>
    </location>
</feature>
<feature type="compositionally biased region" description="Basic and acidic residues" evidence="5">
    <location>
        <begin position="1"/>
        <end position="12"/>
    </location>
</feature>
<feature type="modified residue" description="N6-acetyllysine; alternate" evidence="3">
    <location>
        <position position="5"/>
    </location>
</feature>
<feature type="modified residue" description="N6-methyllysine; alternate" evidence="3">
    <location>
        <position position="5"/>
    </location>
</feature>
<feature type="modified residue" description="N6-acetyllysine; alternate" evidence="3">
    <location>
        <position position="8"/>
    </location>
</feature>
<feature type="modified residue" description="N6-methyllysine; alternate" evidence="3">
    <location>
        <position position="8"/>
    </location>
</feature>
<feature type="modified residue" description="N6-acetyllysine; alternate" evidence="3">
    <location>
        <position position="12"/>
    </location>
</feature>
<feature type="modified residue" description="N6-lactoyllysine; alternate" evidence="3">
    <location>
        <position position="12"/>
    </location>
</feature>
<feature type="modified residue" description="N6-acetyllysine; alternate" evidence="3">
    <location>
        <position position="14"/>
    </location>
</feature>
<feature type="modified residue" description="N6-lactoyllysine; alternate" evidence="3">
    <location>
        <position position="14"/>
    </location>
</feature>
<feature type="modified residue" description="N6-lactoyllysine" evidence="3">
    <location>
        <position position="116"/>
    </location>
</feature>
<feature type="cross-link" description="Glycyl lysine isopeptide (Lys-Gly) (interchain with G-Cter in ubiquitin)" evidence="3">
    <location>
        <position position="122"/>
    </location>
</feature>